<name>ATPE_CLOPE</name>
<protein>
    <recommendedName>
        <fullName evidence="1">ATP synthase epsilon chain</fullName>
    </recommendedName>
    <alternativeName>
        <fullName evidence="1">ATP synthase F1 sector epsilon subunit</fullName>
    </alternativeName>
    <alternativeName>
        <fullName evidence="1">F-ATPase epsilon subunit</fullName>
    </alternativeName>
</protein>
<sequence>MNKFKLIVTTPERVLISGEVSRVLCKNAVGEFEILAGHQPYLTATVPTVTRIDDENGESKYLFTSTGLMKVQNNEVTFCVNSAEWPEEIDEARAMNAKQRAEERLKNKTDELDEKRAKLALARAMSRLKLKEM</sequence>
<proteinExistence type="inferred from homology"/>
<organism>
    <name type="scientific">Clostridium perfringens (strain 13 / Type A)</name>
    <dbReference type="NCBI Taxonomy" id="195102"/>
    <lineage>
        <taxon>Bacteria</taxon>
        <taxon>Bacillati</taxon>
        <taxon>Bacillota</taxon>
        <taxon>Clostridia</taxon>
        <taxon>Eubacteriales</taxon>
        <taxon>Clostridiaceae</taxon>
        <taxon>Clostridium</taxon>
    </lineage>
</organism>
<reference key="1">
    <citation type="journal article" date="2002" name="Proc. Natl. Acad. Sci. U.S.A.">
        <title>Complete genome sequence of Clostridium perfringens, an anaerobic flesh-eater.</title>
        <authorList>
            <person name="Shimizu T."/>
            <person name="Ohtani K."/>
            <person name="Hirakawa H."/>
            <person name="Ohshima K."/>
            <person name="Yamashita A."/>
            <person name="Shiba T."/>
            <person name="Ogasawara N."/>
            <person name="Hattori M."/>
            <person name="Kuhara S."/>
            <person name="Hayashi H."/>
        </authorList>
    </citation>
    <scope>NUCLEOTIDE SEQUENCE [LARGE SCALE GENOMIC DNA]</scope>
    <source>
        <strain>13 / Type A</strain>
    </source>
</reference>
<feature type="chain" id="PRO_0000188123" description="ATP synthase epsilon chain">
    <location>
        <begin position="1"/>
        <end position="133"/>
    </location>
</feature>
<evidence type="ECO:0000255" key="1">
    <source>
        <dbReference type="HAMAP-Rule" id="MF_00530"/>
    </source>
</evidence>
<accession>Q8XID5</accession>
<comment type="function">
    <text evidence="1">Produces ATP from ADP in the presence of a proton gradient across the membrane.</text>
</comment>
<comment type="subunit">
    <text>F-type ATPases have 2 components, CF(1) - the catalytic core - and CF(0) - the membrane proton channel. CF(1) has five subunits: alpha(3), beta(3), gamma(1), delta(1), epsilon(1). CF(0) has three main subunits: a, b and c.</text>
</comment>
<comment type="subcellular location">
    <subcellularLocation>
        <location evidence="1">Cell membrane</location>
        <topology evidence="1">Peripheral membrane protein</topology>
    </subcellularLocation>
</comment>
<comment type="similarity">
    <text evidence="1">Belongs to the ATPase epsilon chain family.</text>
</comment>
<dbReference type="EMBL" id="BA000016">
    <property type="protein sequence ID" value="BAB81892.1"/>
    <property type="molecule type" value="Genomic_DNA"/>
</dbReference>
<dbReference type="RefSeq" id="WP_003452358.1">
    <property type="nucleotide sequence ID" value="NC_003366.1"/>
</dbReference>
<dbReference type="SMR" id="Q8XID5"/>
<dbReference type="STRING" id="195102.gene:10491465"/>
<dbReference type="KEGG" id="cpe:CPE2186"/>
<dbReference type="HOGENOM" id="CLU_084338_1_3_9"/>
<dbReference type="Proteomes" id="UP000000818">
    <property type="component" value="Chromosome"/>
</dbReference>
<dbReference type="GO" id="GO:0005886">
    <property type="term" value="C:plasma membrane"/>
    <property type="evidence" value="ECO:0007669"/>
    <property type="project" value="UniProtKB-SubCell"/>
</dbReference>
<dbReference type="GO" id="GO:0045259">
    <property type="term" value="C:proton-transporting ATP synthase complex"/>
    <property type="evidence" value="ECO:0007669"/>
    <property type="project" value="UniProtKB-KW"/>
</dbReference>
<dbReference type="GO" id="GO:0005524">
    <property type="term" value="F:ATP binding"/>
    <property type="evidence" value="ECO:0007669"/>
    <property type="project" value="UniProtKB-UniRule"/>
</dbReference>
<dbReference type="GO" id="GO:0046933">
    <property type="term" value="F:proton-transporting ATP synthase activity, rotational mechanism"/>
    <property type="evidence" value="ECO:0007669"/>
    <property type="project" value="UniProtKB-UniRule"/>
</dbReference>
<dbReference type="CDD" id="cd12152">
    <property type="entry name" value="F1-ATPase_delta"/>
    <property type="match status" value="1"/>
</dbReference>
<dbReference type="FunFam" id="1.20.5.440:FF:000001">
    <property type="entry name" value="ATP synthase epsilon chain"/>
    <property type="match status" value="1"/>
</dbReference>
<dbReference type="Gene3D" id="1.20.5.440">
    <property type="entry name" value="ATP synthase delta/epsilon subunit, C-terminal domain"/>
    <property type="match status" value="1"/>
</dbReference>
<dbReference type="Gene3D" id="2.60.15.10">
    <property type="entry name" value="F0F1 ATP synthase delta/epsilon subunit, N-terminal"/>
    <property type="match status" value="1"/>
</dbReference>
<dbReference type="HAMAP" id="MF_00530">
    <property type="entry name" value="ATP_synth_epsil_bac"/>
    <property type="match status" value="1"/>
</dbReference>
<dbReference type="InterPro" id="IPR036794">
    <property type="entry name" value="ATP_F1_dsu/esu_C_sf"/>
</dbReference>
<dbReference type="InterPro" id="IPR001469">
    <property type="entry name" value="ATP_synth_F1_dsu/esu"/>
</dbReference>
<dbReference type="InterPro" id="IPR020546">
    <property type="entry name" value="ATP_synth_F1_dsu/esu_N"/>
</dbReference>
<dbReference type="InterPro" id="IPR020547">
    <property type="entry name" value="ATP_synth_F1_esu_C"/>
</dbReference>
<dbReference type="InterPro" id="IPR036771">
    <property type="entry name" value="ATPsynth_dsu/esu_N"/>
</dbReference>
<dbReference type="NCBIfam" id="TIGR01216">
    <property type="entry name" value="ATP_synt_epsi"/>
    <property type="match status" value="1"/>
</dbReference>
<dbReference type="NCBIfam" id="NF009984">
    <property type="entry name" value="PRK13450.1"/>
    <property type="match status" value="1"/>
</dbReference>
<dbReference type="PANTHER" id="PTHR13822">
    <property type="entry name" value="ATP SYNTHASE DELTA/EPSILON CHAIN"/>
    <property type="match status" value="1"/>
</dbReference>
<dbReference type="PANTHER" id="PTHR13822:SF10">
    <property type="entry name" value="ATP SYNTHASE EPSILON CHAIN, CHLOROPLASTIC"/>
    <property type="match status" value="1"/>
</dbReference>
<dbReference type="Pfam" id="PF00401">
    <property type="entry name" value="ATP-synt_DE"/>
    <property type="match status" value="1"/>
</dbReference>
<dbReference type="Pfam" id="PF02823">
    <property type="entry name" value="ATP-synt_DE_N"/>
    <property type="match status" value="1"/>
</dbReference>
<dbReference type="SUPFAM" id="SSF46604">
    <property type="entry name" value="Epsilon subunit of F1F0-ATP synthase C-terminal domain"/>
    <property type="match status" value="1"/>
</dbReference>
<dbReference type="SUPFAM" id="SSF51344">
    <property type="entry name" value="Epsilon subunit of F1F0-ATP synthase N-terminal domain"/>
    <property type="match status" value="1"/>
</dbReference>
<keyword id="KW-0066">ATP synthesis</keyword>
<keyword id="KW-1003">Cell membrane</keyword>
<keyword id="KW-0139">CF(1)</keyword>
<keyword id="KW-0375">Hydrogen ion transport</keyword>
<keyword id="KW-0406">Ion transport</keyword>
<keyword id="KW-0472">Membrane</keyword>
<keyword id="KW-1185">Reference proteome</keyword>
<keyword id="KW-0813">Transport</keyword>
<gene>
    <name evidence="1" type="primary">atpC</name>
    <name type="synonym">atpE</name>
    <name type="ordered locus">CPE2186</name>
</gene>